<accession>Q6ZQ82</accession>
<accession>E9QLL3</accession>
<gene>
    <name type="primary">Arhgap26</name>
    <name type="synonym">Kiaa0621</name>
</gene>
<keyword id="KW-0965">Cell junction</keyword>
<keyword id="KW-0963">Cytoplasm</keyword>
<keyword id="KW-0206">Cytoskeleton</keyword>
<keyword id="KW-0967">Endosome</keyword>
<keyword id="KW-0343">GTPase activation</keyword>
<keyword id="KW-0472">Membrane</keyword>
<keyword id="KW-0597">Phosphoprotein</keyword>
<keyword id="KW-1185">Reference proteome</keyword>
<keyword id="KW-0728">SH3 domain</keyword>
<protein>
    <recommendedName>
        <fullName>Rho GTPase-activating protein 26</fullName>
    </recommendedName>
    <alternativeName>
        <fullName>Rho-type GTPase-activating protein 26</fullName>
    </alternativeName>
</protein>
<evidence type="ECO:0000250" key="1"/>
<evidence type="ECO:0000250" key="2">
    <source>
        <dbReference type="UniProtKB" id="A1A4S6"/>
    </source>
</evidence>
<evidence type="ECO:0000250" key="3">
    <source>
        <dbReference type="UniProtKB" id="Q5ZMW5"/>
    </source>
</evidence>
<evidence type="ECO:0000250" key="4">
    <source>
        <dbReference type="UniProtKB" id="Q9UNA1"/>
    </source>
</evidence>
<evidence type="ECO:0000255" key="5">
    <source>
        <dbReference type="PROSITE-ProRule" id="PRU00145"/>
    </source>
</evidence>
<evidence type="ECO:0000255" key="6">
    <source>
        <dbReference type="PROSITE-ProRule" id="PRU00172"/>
    </source>
</evidence>
<evidence type="ECO:0000255" key="7">
    <source>
        <dbReference type="PROSITE-ProRule" id="PRU00192"/>
    </source>
</evidence>
<evidence type="ECO:0000256" key="8">
    <source>
        <dbReference type="SAM" id="MobiDB-lite"/>
    </source>
</evidence>
<evidence type="ECO:0000269" key="9">
    <source>
    </source>
</evidence>
<evidence type="ECO:0000305" key="10"/>
<name>RHG26_MOUSE</name>
<organism>
    <name type="scientific">Mus musculus</name>
    <name type="common">Mouse</name>
    <dbReference type="NCBI Taxonomy" id="10090"/>
    <lineage>
        <taxon>Eukaryota</taxon>
        <taxon>Metazoa</taxon>
        <taxon>Chordata</taxon>
        <taxon>Craniata</taxon>
        <taxon>Vertebrata</taxon>
        <taxon>Euteleostomi</taxon>
        <taxon>Mammalia</taxon>
        <taxon>Eutheria</taxon>
        <taxon>Euarchontoglires</taxon>
        <taxon>Glires</taxon>
        <taxon>Rodentia</taxon>
        <taxon>Myomorpha</taxon>
        <taxon>Muroidea</taxon>
        <taxon>Muridae</taxon>
        <taxon>Murinae</taxon>
        <taxon>Mus</taxon>
        <taxon>Mus</taxon>
    </lineage>
</organism>
<feature type="chain" id="PRO_0000355553" description="Rho GTPase-activating protein 26">
    <location>
        <begin position="1"/>
        <end position="814"/>
    </location>
</feature>
<feature type="domain" description="BAR" evidence="2">
    <location>
        <begin position="7"/>
        <end position="262"/>
    </location>
</feature>
<feature type="domain" description="PH" evidence="5">
    <location>
        <begin position="265"/>
        <end position="369"/>
    </location>
</feature>
<feature type="domain" description="Rho-GAP" evidence="6">
    <location>
        <begin position="383"/>
        <end position="568"/>
    </location>
</feature>
<feature type="domain" description="SH3" evidence="7">
    <location>
        <begin position="756"/>
        <end position="814"/>
    </location>
</feature>
<feature type="region of interest" description="Disordered" evidence="8">
    <location>
        <begin position="584"/>
        <end position="618"/>
    </location>
</feature>
<feature type="region of interest" description="Disordered" evidence="8">
    <location>
        <begin position="638"/>
        <end position="696"/>
    </location>
</feature>
<feature type="compositionally biased region" description="Low complexity" evidence="8">
    <location>
        <begin position="591"/>
        <end position="600"/>
    </location>
</feature>
<feature type="compositionally biased region" description="Low complexity" evidence="8">
    <location>
        <begin position="638"/>
        <end position="661"/>
    </location>
</feature>
<feature type="compositionally biased region" description="Pro residues" evidence="8">
    <location>
        <begin position="662"/>
        <end position="672"/>
    </location>
</feature>
<feature type="compositionally biased region" description="Low complexity" evidence="8">
    <location>
        <begin position="673"/>
        <end position="696"/>
    </location>
</feature>
<feature type="site" description="Arginine finger; crucial for GTP hydrolysis by stabilizing the transition state" evidence="6">
    <location>
        <position position="412"/>
    </location>
</feature>
<feature type="modified residue" description="Phosphoserine" evidence="4">
    <location>
        <position position="668"/>
    </location>
</feature>
<feature type="modified residue" description="Phosphothreonine" evidence="4">
    <location>
        <position position="670"/>
    </location>
</feature>
<feature type="modified residue" description="Phosphoserine" evidence="4">
    <location>
        <position position="671"/>
    </location>
</feature>
<feature type="sequence conflict" description="In Ref. 1; BAC97986." evidence="10" ref="1">
    <original>K</original>
    <variation>E</variation>
    <location>
        <position position="598"/>
    </location>
</feature>
<dbReference type="EMBL" id="AK129176">
    <property type="protein sequence ID" value="BAC97986.1"/>
    <property type="status" value="ALT_INIT"/>
    <property type="molecule type" value="mRNA"/>
</dbReference>
<dbReference type="EMBL" id="AC110730">
    <property type="status" value="NOT_ANNOTATED_CDS"/>
    <property type="molecule type" value="Genomic_DNA"/>
</dbReference>
<dbReference type="EMBL" id="AC129603">
    <property type="status" value="NOT_ANNOTATED_CDS"/>
    <property type="molecule type" value="Genomic_DNA"/>
</dbReference>
<dbReference type="EMBL" id="AC132098">
    <property type="status" value="NOT_ANNOTATED_CDS"/>
    <property type="molecule type" value="Genomic_DNA"/>
</dbReference>
<dbReference type="EMBL" id="AC132450">
    <property type="status" value="NOT_ANNOTATED_CDS"/>
    <property type="molecule type" value="Genomic_DNA"/>
</dbReference>
<dbReference type="EMBL" id="AC133601">
    <property type="status" value="NOT_ANNOTATED_CDS"/>
    <property type="molecule type" value="Genomic_DNA"/>
</dbReference>
<dbReference type="EMBL" id="AC151409">
    <property type="status" value="NOT_ANNOTATED_CDS"/>
    <property type="molecule type" value="Genomic_DNA"/>
</dbReference>
<dbReference type="EMBL" id="AC151580">
    <property type="status" value="NOT_ANNOTATED_CDS"/>
    <property type="molecule type" value="Genomic_DNA"/>
</dbReference>
<dbReference type="CCDS" id="CCDS29205.1"/>
<dbReference type="RefSeq" id="NP_780373.3">
    <property type="nucleotide sequence ID" value="NM_175164.4"/>
</dbReference>
<dbReference type="SMR" id="Q6ZQ82"/>
<dbReference type="BioGRID" id="214619">
    <property type="interactions" value="58"/>
</dbReference>
<dbReference type="FunCoup" id="Q6ZQ82">
    <property type="interactions" value="1869"/>
</dbReference>
<dbReference type="IntAct" id="Q6ZQ82">
    <property type="interactions" value="2"/>
</dbReference>
<dbReference type="MINT" id="Q6ZQ82"/>
<dbReference type="STRING" id="10090.ENSMUSP00000095200"/>
<dbReference type="GlyGen" id="Q6ZQ82">
    <property type="glycosylation" value="3 sites, 1 N-linked glycan (1 site), 1 O-linked glycan (1 site)"/>
</dbReference>
<dbReference type="iPTMnet" id="Q6ZQ82"/>
<dbReference type="PhosphoSitePlus" id="Q6ZQ82"/>
<dbReference type="SwissPalm" id="Q6ZQ82"/>
<dbReference type="PaxDb" id="10090-ENSMUSP00000095200"/>
<dbReference type="ProteomicsDB" id="253277"/>
<dbReference type="Antibodypedia" id="27437">
    <property type="antibodies" value="251 antibodies from 32 providers"/>
</dbReference>
<dbReference type="DNASU" id="71302"/>
<dbReference type="Ensembl" id="ENSMUST00000097593.9">
    <property type="protein sequence ID" value="ENSMUSP00000095200.3"/>
    <property type="gene ID" value="ENSMUSG00000036452.19"/>
</dbReference>
<dbReference type="GeneID" id="71302"/>
<dbReference type="KEGG" id="mmu:71302"/>
<dbReference type="UCSC" id="uc008esr.1">
    <property type="organism name" value="mouse"/>
</dbReference>
<dbReference type="AGR" id="MGI:1918552"/>
<dbReference type="CTD" id="23092"/>
<dbReference type="MGI" id="MGI:1918552">
    <property type="gene designation" value="Arhgap26"/>
</dbReference>
<dbReference type="VEuPathDB" id="HostDB:ENSMUSG00000036452"/>
<dbReference type="eggNOG" id="KOG1451">
    <property type="taxonomic scope" value="Eukaryota"/>
</dbReference>
<dbReference type="GeneTree" id="ENSGT00940000157254"/>
<dbReference type="InParanoid" id="Q6ZQ82"/>
<dbReference type="OMA" id="AXIFNTV"/>
<dbReference type="OrthoDB" id="3183924at2759"/>
<dbReference type="PhylomeDB" id="Q6ZQ82"/>
<dbReference type="TreeFam" id="TF316851"/>
<dbReference type="Reactome" id="R-MMU-8980692">
    <property type="pathway name" value="RHOA GTPase cycle"/>
</dbReference>
<dbReference type="Reactome" id="R-MMU-9013026">
    <property type="pathway name" value="RHOB GTPase cycle"/>
</dbReference>
<dbReference type="Reactome" id="R-MMU-9013106">
    <property type="pathway name" value="RHOC GTPase cycle"/>
</dbReference>
<dbReference type="Reactome" id="R-MMU-9013148">
    <property type="pathway name" value="CDC42 GTPase cycle"/>
</dbReference>
<dbReference type="Reactome" id="R-MMU-9013149">
    <property type="pathway name" value="RAC1 GTPase cycle"/>
</dbReference>
<dbReference type="Reactome" id="R-MMU-9013404">
    <property type="pathway name" value="RAC2 GTPase cycle"/>
</dbReference>
<dbReference type="Reactome" id="R-MMU-9013405">
    <property type="pathway name" value="RHOD GTPase cycle"/>
</dbReference>
<dbReference type="Reactome" id="R-MMU-9013406">
    <property type="pathway name" value="RHOQ GTPase cycle"/>
</dbReference>
<dbReference type="Reactome" id="R-MMU-9013409">
    <property type="pathway name" value="RHOJ GTPase cycle"/>
</dbReference>
<dbReference type="Reactome" id="R-MMU-9013423">
    <property type="pathway name" value="RAC3 GTPase cycle"/>
</dbReference>
<dbReference type="BioGRID-ORCS" id="71302">
    <property type="hits" value="3 hits in 78 CRISPR screens"/>
</dbReference>
<dbReference type="CD-CODE" id="CE726F99">
    <property type="entry name" value="Postsynaptic density"/>
</dbReference>
<dbReference type="ChiTaRS" id="Arhgap26">
    <property type="organism name" value="mouse"/>
</dbReference>
<dbReference type="PRO" id="PR:Q6ZQ82"/>
<dbReference type="Proteomes" id="UP000000589">
    <property type="component" value="Chromosome 18"/>
</dbReference>
<dbReference type="RNAct" id="Q6ZQ82">
    <property type="molecule type" value="protein"/>
</dbReference>
<dbReference type="Bgee" id="ENSMUSG00000036452">
    <property type="expression patterns" value="Expressed in interventricular septum and 210 other cell types or tissues"/>
</dbReference>
<dbReference type="ExpressionAtlas" id="Q6ZQ82">
    <property type="expression patterns" value="baseline and differential"/>
</dbReference>
<dbReference type="GO" id="GO:0005856">
    <property type="term" value="C:cytoskeleton"/>
    <property type="evidence" value="ECO:0007669"/>
    <property type="project" value="UniProtKB-SubCell"/>
</dbReference>
<dbReference type="GO" id="GO:0005829">
    <property type="term" value="C:cytosol"/>
    <property type="evidence" value="ECO:0000250"/>
    <property type="project" value="UniProtKB"/>
</dbReference>
<dbReference type="GO" id="GO:0010008">
    <property type="term" value="C:endosome membrane"/>
    <property type="evidence" value="ECO:0000250"/>
    <property type="project" value="UniProtKB"/>
</dbReference>
<dbReference type="GO" id="GO:0005925">
    <property type="term" value="C:focal adhesion"/>
    <property type="evidence" value="ECO:0007669"/>
    <property type="project" value="UniProtKB-SubCell"/>
</dbReference>
<dbReference type="GO" id="GO:0005739">
    <property type="term" value="C:mitochondrion"/>
    <property type="evidence" value="ECO:0007669"/>
    <property type="project" value="Ensembl"/>
</dbReference>
<dbReference type="GO" id="GO:0005096">
    <property type="term" value="F:GTPase activator activity"/>
    <property type="evidence" value="ECO:0007669"/>
    <property type="project" value="UniProtKB-KW"/>
</dbReference>
<dbReference type="GO" id="GO:0005543">
    <property type="term" value="F:phospholipid binding"/>
    <property type="evidence" value="ECO:0007669"/>
    <property type="project" value="Ensembl"/>
</dbReference>
<dbReference type="GO" id="GO:0030674">
    <property type="term" value="F:protein-macromolecule adaptor activity"/>
    <property type="evidence" value="ECO:0007669"/>
    <property type="project" value="Ensembl"/>
</dbReference>
<dbReference type="GO" id="GO:0000423">
    <property type="term" value="P:mitophagy"/>
    <property type="evidence" value="ECO:0007669"/>
    <property type="project" value="Ensembl"/>
</dbReference>
<dbReference type="GO" id="GO:0007165">
    <property type="term" value="P:signal transduction"/>
    <property type="evidence" value="ECO:0007669"/>
    <property type="project" value="InterPro"/>
</dbReference>
<dbReference type="CDD" id="cd01249">
    <property type="entry name" value="BAR-PH_GRAF_family"/>
    <property type="match status" value="1"/>
</dbReference>
<dbReference type="CDD" id="cd07636">
    <property type="entry name" value="BAR_GRAF"/>
    <property type="match status" value="1"/>
</dbReference>
<dbReference type="CDD" id="cd04374">
    <property type="entry name" value="RhoGAP_Graf"/>
    <property type="match status" value="1"/>
</dbReference>
<dbReference type="CDD" id="cd12064">
    <property type="entry name" value="SH3_GRAF"/>
    <property type="match status" value="1"/>
</dbReference>
<dbReference type="FunFam" id="1.10.555.10:FF:000006">
    <property type="entry name" value="Rho GTPase activating protein 26"/>
    <property type="match status" value="1"/>
</dbReference>
<dbReference type="FunFam" id="2.30.29.30:FF:000116">
    <property type="entry name" value="Rho GTPase activating protein 26"/>
    <property type="match status" value="1"/>
</dbReference>
<dbReference type="FunFam" id="1.20.1270.60:FF:000001">
    <property type="entry name" value="Rho GTPase-activating protein 26"/>
    <property type="match status" value="1"/>
</dbReference>
<dbReference type="FunFam" id="2.30.30.40:FF:000055">
    <property type="entry name" value="rho GTPase-activating protein 26 isoform X1"/>
    <property type="match status" value="1"/>
</dbReference>
<dbReference type="Gene3D" id="1.20.1270.60">
    <property type="entry name" value="Arfaptin homology (AH) domain/BAR domain"/>
    <property type="match status" value="1"/>
</dbReference>
<dbReference type="Gene3D" id="2.30.29.30">
    <property type="entry name" value="Pleckstrin-homology domain (PH domain)/Phosphotyrosine-binding domain (PTB)"/>
    <property type="match status" value="1"/>
</dbReference>
<dbReference type="Gene3D" id="1.10.555.10">
    <property type="entry name" value="Rho GTPase activation protein"/>
    <property type="match status" value="1"/>
</dbReference>
<dbReference type="Gene3D" id="2.30.30.40">
    <property type="entry name" value="SH3 Domains"/>
    <property type="match status" value="1"/>
</dbReference>
<dbReference type="InterPro" id="IPR027267">
    <property type="entry name" value="AH/BAR_dom_sf"/>
</dbReference>
<dbReference type="InterPro" id="IPR004148">
    <property type="entry name" value="BAR_dom"/>
</dbReference>
<dbReference type="InterPro" id="IPR035483">
    <property type="entry name" value="GRAF_BAR"/>
</dbReference>
<dbReference type="InterPro" id="IPR047234">
    <property type="entry name" value="GRAF_fam"/>
</dbReference>
<dbReference type="InterPro" id="IPR035481">
    <property type="entry name" value="GRAF_SH3"/>
</dbReference>
<dbReference type="InterPro" id="IPR011993">
    <property type="entry name" value="PH-like_dom_sf"/>
</dbReference>
<dbReference type="InterPro" id="IPR001849">
    <property type="entry name" value="PH_domain"/>
</dbReference>
<dbReference type="InterPro" id="IPR047225">
    <property type="entry name" value="PH_GRAF"/>
</dbReference>
<dbReference type="InterPro" id="IPR008936">
    <property type="entry name" value="Rho_GTPase_activation_prot"/>
</dbReference>
<dbReference type="InterPro" id="IPR000198">
    <property type="entry name" value="RhoGAP_dom"/>
</dbReference>
<dbReference type="InterPro" id="IPR036028">
    <property type="entry name" value="SH3-like_dom_sf"/>
</dbReference>
<dbReference type="InterPro" id="IPR001452">
    <property type="entry name" value="SH3_domain"/>
</dbReference>
<dbReference type="PANTHER" id="PTHR12552">
    <property type="entry name" value="OLIGOPHRENIN 1"/>
    <property type="match status" value="1"/>
</dbReference>
<dbReference type="PANTHER" id="PTHR12552:SF4">
    <property type="entry name" value="RHO GTPASE-ACTIVATING PROTEIN 26"/>
    <property type="match status" value="1"/>
</dbReference>
<dbReference type="Pfam" id="PF16746">
    <property type="entry name" value="BAR_3"/>
    <property type="match status" value="1"/>
</dbReference>
<dbReference type="Pfam" id="PF00169">
    <property type="entry name" value="PH"/>
    <property type="match status" value="1"/>
</dbReference>
<dbReference type="Pfam" id="PF00620">
    <property type="entry name" value="RhoGAP"/>
    <property type="match status" value="1"/>
</dbReference>
<dbReference type="Pfam" id="PF14604">
    <property type="entry name" value="SH3_9"/>
    <property type="match status" value="1"/>
</dbReference>
<dbReference type="SMART" id="SM00233">
    <property type="entry name" value="PH"/>
    <property type="match status" value="1"/>
</dbReference>
<dbReference type="SMART" id="SM00324">
    <property type="entry name" value="RhoGAP"/>
    <property type="match status" value="1"/>
</dbReference>
<dbReference type="SMART" id="SM00326">
    <property type="entry name" value="SH3"/>
    <property type="match status" value="1"/>
</dbReference>
<dbReference type="SUPFAM" id="SSF103657">
    <property type="entry name" value="BAR/IMD domain-like"/>
    <property type="match status" value="1"/>
</dbReference>
<dbReference type="SUPFAM" id="SSF48350">
    <property type="entry name" value="GTPase activation domain, GAP"/>
    <property type="match status" value="1"/>
</dbReference>
<dbReference type="SUPFAM" id="SSF50729">
    <property type="entry name" value="PH domain-like"/>
    <property type="match status" value="1"/>
</dbReference>
<dbReference type="SUPFAM" id="SSF50044">
    <property type="entry name" value="SH3-domain"/>
    <property type="match status" value="1"/>
</dbReference>
<dbReference type="PROSITE" id="PS50003">
    <property type="entry name" value="PH_DOMAIN"/>
    <property type="match status" value="1"/>
</dbReference>
<dbReference type="PROSITE" id="PS50238">
    <property type="entry name" value="RHOGAP"/>
    <property type="match status" value="1"/>
</dbReference>
<dbReference type="PROSITE" id="PS50002">
    <property type="entry name" value="SH3"/>
    <property type="match status" value="1"/>
</dbReference>
<proteinExistence type="evidence at protein level"/>
<comment type="function">
    <text evidence="3 4">GTPase-activating protein for RHOA and CDC42 (By similarity). Facilitates mitochondrial quality control by promoting Parkin-mediated recruitment of autophagosomes to damaged mitochondria (By similarity). Associates with MICAL1 on the endosomal membrane to promote Rab8-Rab10-dependent tubule extension. After dissociation of MICAL1, recruits WDR44 which connects the endoplasmic reticulum (ER) with the endosomal tubule, thereby participating in the export of a subset of neosynthesized proteins (By similarity).</text>
</comment>
<comment type="subunit">
    <text evidence="3 4 9">Interacts with NYAP1, NYAP2 and MYO16 (PubMed:21946561). Interacts with MICAL1 and WDR44 (By similarity). Binds to the C-terminus of PTK2/FAK1 (By similarity).</text>
</comment>
<comment type="subcellular location">
    <subcellularLocation>
        <location evidence="1">Cell junction</location>
        <location evidence="1">Focal adhesion</location>
    </subcellularLocation>
    <subcellularLocation>
        <location evidence="1">Cytoplasm</location>
        <location evidence="1">Cytoskeleton</location>
    </subcellularLocation>
    <subcellularLocation>
        <location evidence="4">Endosome membrane</location>
    </subcellularLocation>
    <text evidence="1">Colocalizes with actin stress fibers and cortical actin structures.</text>
</comment>
<comment type="domain">
    <text evidence="4">The BAR domain is important to associate RAB8A (or RAB8B) and RAB10 to endosomal membrane to promote tubule extension. The BAR domain is also important to recruit WDR44 to endosomal tubules.</text>
</comment>
<comment type="PTM">
    <text evidence="4">Phosphorylated in a PINK1-dependent fashion promoting retrograde mitochondrial trafficking and clustering.</text>
</comment>
<comment type="sequence caution" evidence="10">
    <conflict type="erroneous initiation">
        <sequence resource="EMBL-CDS" id="BAC97986"/>
    </conflict>
    <text>Extended N-terminus.</text>
</comment>
<sequence>MGLPALEFSDCCLDSPHFRETLKSHEAELDKTNKFIKELIKDGKSLISALKNLSSAKRKFADSLNEFKFQCIGDAETDDEMCIARSLQEFAAVLRNLEDERSRMIENASEVLITPLEKFRKEQIGAAREAKKKYDKETEKYCGTLEKHLNLSSKKKESQLQEADSQVDLVRQHFYEVSLEYVFKVQEVQERKMFEFVEPLLAFLQGLFTFYHHGYELAKDFGDFKTQLTISIQNTRNRFEGTRSEVESLMKKMKENPLEHKTISPYTMEGYLYVQEKRHFGTSWVKHYCTYQRDSKQITMVPFDQKSGGKGGEDESVTLKSCTRRKTDSIEKRFCFDVEAVDRPGVITMQALSEEDRRLWMEAMDGREPVYNSNRDSQSEGTAQLDSIGFSIIRKCIHAVETRGINEQGLYRIVGVNSRVQKLLSVLMDPKAASETETDICAEWEIKTVTSALKTYLRMLPGPLMMYQFQRSFIKAAKLENQETRVSEIHSLVHRLPEKNRQMLQLLMNHLANVANNHKQNLMTVANLGVVFGPTLLRPQEETVAAIMDIKFQNIVIEILIENHEKIFNTVPDVPLTNAQLHLSRKKSSDSKPPSCSKRPLTLFHAVPSTEKQEQRNSIINSSLESVSSSANSILNSSSSLQPNLNSSDSNLDVVKPSRPSSLPPNPSPTSPLSPSWPMFSAPSSPMPTSSTSSDSSPIRSVAGFVWFSVAAVVLSLAWSSLHAVFSLLVNFVPCHPNLHLLFDRPEEAVREDSSTPFRKAKALYACQAEHDSELSFTAGTVFDNVHPSQEPGWLEGTLNGKTGLIPENYVEFL</sequence>
<reference key="1">
    <citation type="journal article" date="2003" name="DNA Res.">
        <title>Prediction of the coding sequences of mouse homologues of KIAA gene: III. The complete nucleotide sequences of 500 mouse KIAA-homologous cDNAs identified by screening of terminal sequences of cDNA clones randomly sampled from size-fractionated libraries.</title>
        <authorList>
            <person name="Okazaki N."/>
            <person name="Kikuno R."/>
            <person name="Ohara R."/>
            <person name="Inamoto S."/>
            <person name="Koseki H."/>
            <person name="Hiraoka S."/>
            <person name="Saga Y."/>
            <person name="Nagase T."/>
            <person name="Ohara O."/>
            <person name="Koga H."/>
        </authorList>
    </citation>
    <scope>NUCLEOTIDE SEQUENCE [LARGE SCALE MRNA]</scope>
    <source>
        <tissue>Brain</tissue>
    </source>
</reference>
<reference key="2">
    <citation type="journal article" date="2009" name="PLoS Biol.">
        <title>Lineage-specific biology revealed by a finished genome assembly of the mouse.</title>
        <authorList>
            <person name="Church D.M."/>
            <person name="Goodstadt L."/>
            <person name="Hillier L.W."/>
            <person name="Zody M.C."/>
            <person name="Goldstein S."/>
            <person name="She X."/>
            <person name="Bult C.J."/>
            <person name="Agarwala R."/>
            <person name="Cherry J.L."/>
            <person name="DiCuccio M."/>
            <person name="Hlavina W."/>
            <person name="Kapustin Y."/>
            <person name="Meric P."/>
            <person name="Maglott D."/>
            <person name="Birtle Z."/>
            <person name="Marques A.C."/>
            <person name="Graves T."/>
            <person name="Zhou S."/>
            <person name="Teague B."/>
            <person name="Potamousis K."/>
            <person name="Churas C."/>
            <person name="Place M."/>
            <person name="Herschleb J."/>
            <person name="Runnheim R."/>
            <person name="Forrest D."/>
            <person name="Amos-Landgraf J."/>
            <person name="Schwartz D.C."/>
            <person name="Cheng Z."/>
            <person name="Lindblad-Toh K."/>
            <person name="Eichler E.E."/>
            <person name="Ponting C.P."/>
        </authorList>
    </citation>
    <scope>NUCLEOTIDE SEQUENCE [LARGE SCALE GENOMIC DNA]</scope>
    <source>
        <strain>C57BL/6J</strain>
    </source>
</reference>
<reference key="3">
    <citation type="journal article" date="2010" name="Cell">
        <title>A tissue-specific atlas of mouse protein phosphorylation and expression.</title>
        <authorList>
            <person name="Huttlin E.L."/>
            <person name="Jedrychowski M.P."/>
            <person name="Elias J.E."/>
            <person name="Goswami T."/>
            <person name="Rad R."/>
            <person name="Beausoleil S.A."/>
            <person name="Villen J."/>
            <person name="Haas W."/>
            <person name="Sowa M.E."/>
            <person name="Gygi S.P."/>
        </authorList>
    </citation>
    <scope>IDENTIFICATION BY MASS SPECTROMETRY [LARGE SCALE ANALYSIS]</scope>
    <source>
        <tissue>Brain</tissue>
        <tissue>Kidney</tissue>
        <tissue>Spleen</tissue>
    </source>
</reference>
<reference key="4">
    <citation type="journal article" date="2011" name="EMBO J.">
        <title>NYAP: a phosphoprotein family that links PI3K to WAVE1 signalling in neurons.</title>
        <authorList>
            <person name="Yokoyama K."/>
            <person name="Tezuka T."/>
            <person name="Kotani M."/>
            <person name="Nakazawa T."/>
            <person name="Hoshina N."/>
            <person name="Shimoda Y."/>
            <person name="Kakuta S."/>
            <person name="Sudo K."/>
            <person name="Watanabe K."/>
            <person name="Iwakura Y."/>
            <person name="Yamamoto T."/>
        </authorList>
    </citation>
    <scope>INTERACTION WITH NYAP1; NYAP2 AND MYO16</scope>
</reference>